<comment type="function">
    <text evidence="3 4">Transcriptional repressor that down-regulates bmp4 signaling in both mesoderm and ectoderm. Regulates mesoderm patterning by repressing ventral mesoderm genes and promoting the expression of dorsolateral genes. Can also neuralize ectodermal cells directly. Inhibits neural crest migration. The transcription factors foxd1 and foxg1 mutually repress each other to pattern the forebrain.</text>
</comment>
<comment type="subcellular location">
    <subcellularLocation>
        <location evidence="1 4">Nucleus</location>
    </subcellularLocation>
</comment>
<comment type="tissue specificity">
    <text evidence="3 4">Expressed in gastrula (stage 10) embryos in the dorsolateral mesoderm, where expression continues until mesoderm involution. In early neurula embryos (stage 12.5), expressed in the anterior neural plate in the prospective diencephalon and eye field, and in the anterior neural folds, with expression becoming stronger as neurulation proceeds. At stage 14, transiently expressed in two stripes lateral to the midline. Expressed in premigratory, but not migratory, cephalic neural crest cells. At stage 20, expressed in the paraxial mesoderm and in the optic vesicle. At stage 21, expression continues in the forebrain and begins in cells lateral to the rostral somites as well as in the neural tissue of the tailbud. By stage 36, detected in restricted regions of the forebrain and in the temporal retina. Caudally, expression continues in the neural tissue of the tailbud. At this stage, there is also strong expression at the caudal (tail) end of the embryo on the ventral side.</text>
</comment>
<accession>Q9PSY4</accession>
<accession>O93613</accession>
<accession>Q32NK9</accession>
<organism>
    <name type="scientific">Xenopus laevis</name>
    <name type="common">African clawed frog</name>
    <dbReference type="NCBI Taxonomy" id="8355"/>
    <lineage>
        <taxon>Eukaryota</taxon>
        <taxon>Metazoa</taxon>
        <taxon>Chordata</taxon>
        <taxon>Craniata</taxon>
        <taxon>Vertebrata</taxon>
        <taxon>Euteleostomi</taxon>
        <taxon>Amphibia</taxon>
        <taxon>Batrachia</taxon>
        <taxon>Anura</taxon>
        <taxon>Pipoidea</taxon>
        <taxon>Pipidae</taxon>
        <taxon>Xenopodinae</taxon>
        <taxon>Xenopus</taxon>
        <taxon>Xenopus</taxon>
    </lineage>
</organism>
<reference evidence="7 8" key="1">
    <citation type="journal article" date="1998" name="Development">
        <title>XBF-2 is a transcriptional repressor that converts ectoderm into neural tissue.</title>
        <authorList>
            <person name="Mariani F.V."/>
            <person name="Harland R.M."/>
        </authorList>
    </citation>
    <scope>NUCLEOTIDE SEQUENCE [MRNA]</scope>
    <scope>FUNCTION</scope>
    <scope>SUBCELLULAR LOCATION</scope>
    <scope>TISSUE SPECIFICITY</scope>
    <source>
        <tissue evidence="4">Neurula</tissue>
    </source>
</reference>
<reference evidence="7 10" key="2">
    <citation type="journal article" date="1999" name="Mech. Dev.">
        <title>Xenopus brain factor-2 controls mesoderm, forebrain and neural crest development.</title>
        <authorList>
            <person name="Gomez-Skarmeta J.L."/>
            <person name="de la Calle-Mustienes E."/>
            <person name="Modolell J."/>
            <person name="Mayor R."/>
        </authorList>
    </citation>
    <scope>NUCLEOTIDE SEQUENCE [MRNA]</scope>
    <scope>FUNCTION</scope>
    <scope>TISSUE SPECIFICITY</scope>
    <source>
        <tissue evidence="3">Gastrula</tissue>
    </source>
</reference>
<reference evidence="9" key="3">
    <citation type="submission" date="2005-11" db="EMBL/GenBank/DDBJ databases">
        <authorList>
            <consortium name="NIH - Xenopus Gene Collection (XGC) project"/>
        </authorList>
    </citation>
    <scope>NUCLEOTIDE SEQUENCE [LARGE SCALE MRNA]</scope>
    <source>
        <tissue evidence="9">Neurula</tissue>
    </source>
</reference>
<reference evidence="7" key="4">
    <citation type="journal article" date="2005" name="Gene">
        <title>Of fox and frogs: fox (fork head/winged helix) transcription factors in Xenopus development.</title>
        <authorList>
            <person name="Pohl B.S."/>
            <person name="Knoechel W."/>
        </authorList>
    </citation>
    <scope>REVIEW</scope>
</reference>
<name>FOXD1_XENLA</name>
<keyword id="KW-0217">Developmental protein</keyword>
<keyword id="KW-0221">Differentiation</keyword>
<keyword id="KW-0238">DNA-binding</keyword>
<keyword id="KW-0524">Neurogenesis</keyword>
<keyword id="KW-0539">Nucleus</keyword>
<keyword id="KW-1185">Reference proteome</keyword>
<keyword id="KW-0678">Repressor</keyword>
<keyword id="KW-0804">Transcription</keyword>
<keyword id="KW-0805">Transcription regulation</keyword>
<sequence length="345" mass="38049">MTLSSDMSDVLAEETDIDVVGEEDEPRAEEEEEEDGELLMPRSPHCSSTKDPYKAAGSGGVGRSALVKPPYSYIALITMSILQSPKKRLTLSEICDFISSRFPYYREKFPAWQNSIRHNLSLNDCFVKIPREPGNPGKGNYWTLDPESADMFDNGSFLRRRKRFKRQQVPELVLREPGHFLPASAYGYGPYSCAYGIQIQPFHPHSALIAFQQQQQHQQQQARHQQQQARHQQQQARHQQQPPSLPSMAAPALMPPAAQDLSRTCTFYPHQLSPAALPPSLQSKSSSALARSTFSIESIIGGDLNPGPKAAGVPVISRALVTFSSSEAAAALGGNLQPGTVLTNH</sequence>
<protein>
    <recommendedName>
        <fullName>Forkhead box protein D1</fullName>
        <shortName>FoxD1</shortName>
    </recommendedName>
    <alternativeName>
        <fullName>Brain factor 2</fullName>
        <shortName>BF-2</shortName>
        <shortName>xBF-2</shortName>
    </alternativeName>
    <alternativeName>
        <fullName>Xbf2</fullName>
    </alternativeName>
</protein>
<dbReference type="EMBL" id="AF072889">
    <property type="protein sequence ID" value="AAC78313.1"/>
    <property type="molecule type" value="mRNA"/>
</dbReference>
<dbReference type="EMBL" id="AJ011652">
    <property type="protein sequence ID" value="CAA09725.1"/>
    <property type="molecule type" value="mRNA"/>
</dbReference>
<dbReference type="EMBL" id="BC108577">
    <property type="protein sequence ID" value="AAI08578.1"/>
    <property type="molecule type" value="mRNA"/>
</dbReference>
<dbReference type="RefSeq" id="NP_001079052.1">
    <property type="nucleotide sequence ID" value="NM_001085583.1"/>
</dbReference>
<dbReference type="SMR" id="Q9PSY4"/>
<dbReference type="DNASU" id="373583"/>
<dbReference type="GeneID" id="373583"/>
<dbReference type="KEGG" id="xla:373583"/>
<dbReference type="AGR" id="Xenbase:XB-GENE-865762"/>
<dbReference type="CTD" id="373583"/>
<dbReference type="Xenbase" id="XB-GENE-865762">
    <property type="gene designation" value="foxd1.L"/>
</dbReference>
<dbReference type="OMA" id="AHSHCAS"/>
<dbReference type="OrthoDB" id="5402974at2759"/>
<dbReference type="Proteomes" id="UP000186698">
    <property type="component" value="Chromosome 1L"/>
</dbReference>
<dbReference type="Bgee" id="373583">
    <property type="expression patterns" value="Expressed in neurula embryo and 7 other cell types or tissues"/>
</dbReference>
<dbReference type="GO" id="GO:0005634">
    <property type="term" value="C:nucleus"/>
    <property type="evidence" value="ECO:0000314"/>
    <property type="project" value="UniProtKB"/>
</dbReference>
<dbReference type="GO" id="GO:0000981">
    <property type="term" value="F:DNA-binding transcription factor activity, RNA polymerase II-specific"/>
    <property type="evidence" value="ECO:0000318"/>
    <property type="project" value="GO_Central"/>
</dbReference>
<dbReference type="GO" id="GO:0000978">
    <property type="term" value="F:RNA polymerase II cis-regulatory region sequence-specific DNA binding"/>
    <property type="evidence" value="ECO:0000318"/>
    <property type="project" value="GO_Central"/>
</dbReference>
<dbReference type="GO" id="GO:0009653">
    <property type="term" value="P:anatomical structure morphogenesis"/>
    <property type="evidence" value="ECO:0000318"/>
    <property type="project" value="GO_Central"/>
</dbReference>
<dbReference type="GO" id="GO:0030154">
    <property type="term" value="P:cell differentiation"/>
    <property type="evidence" value="ECO:0000318"/>
    <property type="project" value="GO_Central"/>
</dbReference>
<dbReference type="GO" id="GO:0007398">
    <property type="term" value="P:ectoderm development"/>
    <property type="evidence" value="ECO:0000315"/>
    <property type="project" value="UniProtKB"/>
</dbReference>
<dbReference type="GO" id="GO:0030900">
    <property type="term" value="P:forebrain development"/>
    <property type="evidence" value="ECO:0000315"/>
    <property type="project" value="UniProtKB"/>
</dbReference>
<dbReference type="GO" id="GO:0007498">
    <property type="term" value="P:mesoderm development"/>
    <property type="evidence" value="ECO:0000315"/>
    <property type="project" value="UniProtKB"/>
</dbReference>
<dbReference type="GO" id="GO:0030336">
    <property type="term" value="P:negative regulation of cell migration"/>
    <property type="evidence" value="ECO:0000315"/>
    <property type="project" value="UniProtKB"/>
</dbReference>
<dbReference type="GO" id="GO:0045892">
    <property type="term" value="P:negative regulation of DNA-templated transcription"/>
    <property type="evidence" value="ECO:0000314"/>
    <property type="project" value="UniProtKB"/>
</dbReference>
<dbReference type="GO" id="GO:0000122">
    <property type="term" value="P:negative regulation of transcription by RNA polymerase II"/>
    <property type="evidence" value="ECO:0000314"/>
    <property type="project" value="UniProtKB"/>
</dbReference>
<dbReference type="GO" id="GO:0007399">
    <property type="term" value="P:nervous system development"/>
    <property type="evidence" value="ECO:0000315"/>
    <property type="project" value="UniProtKB"/>
</dbReference>
<dbReference type="GO" id="GO:0001755">
    <property type="term" value="P:neural crest cell migration"/>
    <property type="evidence" value="ECO:0000315"/>
    <property type="project" value="UniProtKB"/>
</dbReference>
<dbReference type="GO" id="GO:0006357">
    <property type="term" value="P:regulation of transcription by RNA polymerase II"/>
    <property type="evidence" value="ECO:0000318"/>
    <property type="project" value="GO_Central"/>
</dbReference>
<dbReference type="CDD" id="cd20046">
    <property type="entry name" value="FH_FOXD1_D2-like"/>
    <property type="match status" value="1"/>
</dbReference>
<dbReference type="FunFam" id="1.10.10.10:FF:000016">
    <property type="entry name" value="Forkhead box protein I1"/>
    <property type="match status" value="1"/>
</dbReference>
<dbReference type="Gene3D" id="1.10.10.10">
    <property type="entry name" value="Winged helix-like DNA-binding domain superfamily/Winged helix DNA-binding domain"/>
    <property type="match status" value="1"/>
</dbReference>
<dbReference type="InterPro" id="IPR001766">
    <property type="entry name" value="Fork_head_dom"/>
</dbReference>
<dbReference type="InterPro" id="IPR050211">
    <property type="entry name" value="FOX_domain-containing"/>
</dbReference>
<dbReference type="InterPro" id="IPR030456">
    <property type="entry name" value="TF_fork_head_CS_2"/>
</dbReference>
<dbReference type="InterPro" id="IPR036388">
    <property type="entry name" value="WH-like_DNA-bd_sf"/>
</dbReference>
<dbReference type="InterPro" id="IPR036390">
    <property type="entry name" value="WH_DNA-bd_sf"/>
</dbReference>
<dbReference type="PANTHER" id="PTHR11829">
    <property type="entry name" value="FORKHEAD BOX PROTEIN"/>
    <property type="match status" value="1"/>
</dbReference>
<dbReference type="PANTHER" id="PTHR11829:SF407">
    <property type="entry name" value="FORKHEAD BOX PROTEIN D1"/>
    <property type="match status" value="1"/>
</dbReference>
<dbReference type="Pfam" id="PF00250">
    <property type="entry name" value="Forkhead"/>
    <property type="match status" value="1"/>
</dbReference>
<dbReference type="PRINTS" id="PR00053">
    <property type="entry name" value="FORKHEAD"/>
</dbReference>
<dbReference type="SMART" id="SM00339">
    <property type="entry name" value="FH"/>
    <property type="match status" value="1"/>
</dbReference>
<dbReference type="SUPFAM" id="SSF46785">
    <property type="entry name" value="Winged helix' DNA-binding domain"/>
    <property type="match status" value="1"/>
</dbReference>
<dbReference type="PROSITE" id="PS00658">
    <property type="entry name" value="FORK_HEAD_2"/>
    <property type="match status" value="1"/>
</dbReference>
<dbReference type="PROSITE" id="PS50039">
    <property type="entry name" value="FORK_HEAD_3"/>
    <property type="match status" value="1"/>
</dbReference>
<gene>
    <name evidence="6" type="primary">foxd1</name>
    <name evidence="8" type="synonym">bf-2</name>
    <name evidence="5" type="synonym">bf2</name>
</gene>
<feature type="chain" id="PRO_0000253929" description="Forkhead box protein D1">
    <location>
        <begin position="1"/>
        <end position="345"/>
    </location>
</feature>
<feature type="DNA-binding region" description="Fork-head" evidence="1">
    <location>
        <begin position="68"/>
        <end position="162"/>
    </location>
</feature>
<feature type="region of interest" description="Disordered" evidence="2">
    <location>
        <begin position="1"/>
        <end position="59"/>
    </location>
</feature>
<feature type="region of interest" description="Disordered" evidence="2">
    <location>
        <begin position="211"/>
        <end position="252"/>
    </location>
</feature>
<feature type="compositionally biased region" description="Acidic residues" evidence="2">
    <location>
        <begin position="11"/>
        <end position="37"/>
    </location>
</feature>
<feature type="compositionally biased region" description="Low complexity" evidence="2">
    <location>
        <begin position="212"/>
        <end position="252"/>
    </location>
</feature>
<feature type="sequence conflict" description="In Ref. 1; AAC78313." evidence="7" ref="1">
    <original>E</original>
    <variation>V</variation>
    <location>
        <position position="29"/>
    </location>
</feature>
<feature type="sequence conflict" description="In Ref. 3; AAI08578." evidence="7" ref="3">
    <original>A</original>
    <variation>V</variation>
    <location>
        <position position="229"/>
    </location>
</feature>
<feature type="sequence conflict" description="In Ref. 2; CAA09725." evidence="7" ref="2">
    <original>L</original>
    <variation>F</variation>
    <location>
        <position position="272"/>
    </location>
</feature>
<evidence type="ECO:0000255" key="1">
    <source>
        <dbReference type="PROSITE-ProRule" id="PRU00089"/>
    </source>
</evidence>
<evidence type="ECO:0000256" key="2">
    <source>
        <dbReference type="SAM" id="MobiDB-lite"/>
    </source>
</evidence>
<evidence type="ECO:0000269" key="3">
    <source>
    </source>
</evidence>
<evidence type="ECO:0000269" key="4">
    <source>
    </source>
</evidence>
<evidence type="ECO:0000303" key="5">
    <source>
    </source>
</evidence>
<evidence type="ECO:0000303" key="6">
    <source>
    </source>
</evidence>
<evidence type="ECO:0000305" key="7"/>
<evidence type="ECO:0000312" key="8">
    <source>
        <dbReference type="EMBL" id="AAC78313.1"/>
    </source>
</evidence>
<evidence type="ECO:0000312" key="9">
    <source>
        <dbReference type="EMBL" id="AAI08578.1"/>
    </source>
</evidence>
<evidence type="ECO:0000312" key="10">
    <source>
        <dbReference type="EMBL" id="CAA09725.1"/>
    </source>
</evidence>
<proteinExistence type="evidence at transcript level"/>